<name>GLO2_METNO</name>
<evidence type="ECO:0000255" key="1">
    <source>
        <dbReference type="HAMAP-Rule" id="MF_01374"/>
    </source>
</evidence>
<accession>B8ICA2</accession>
<reference key="1">
    <citation type="submission" date="2009-01" db="EMBL/GenBank/DDBJ databases">
        <title>Complete sequence of chromosome of Methylobacterium nodulans ORS 2060.</title>
        <authorList>
            <consortium name="US DOE Joint Genome Institute"/>
            <person name="Lucas S."/>
            <person name="Copeland A."/>
            <person name="Lapidus A."/>
            <person name="Glavina del Rio T."/>
            <person name="Dalin E."/>
            <person name="Tice H."/>
            <person name="Bruce D."/>
            <person name="Goodwin L."/>
            <person name="Pitluck S."/>
            <person name="Sims D."/>
            <person name="Brettin T."/>
            <person name="Detter J.C."/>
            <person name="Han C."/>
            <person name="Larimer F."/>
            <person name="Land M."/>
            <person name="Hauser L."/>
            <person name="Kyrpides N."/>
            <person name="Ivanova N."/>
            <person name="Marx C.J."/>
            <person name="Richardson P."/>
        </authorList>
    </citation>
    <scope>NUCLEOTIDE SEQUENCE [LARGE SCALE GENOMIC DNA]</scope>
    <source>
        <strain>LMG 21967 / CNCM I-2342 / ORS 2060</strain>
    </source>
</reference>
<feature type="chain" id="PRO_1000184181" description="Hydroxyacylglutathione hydrolase">
    <location>
        <begin position="1"/>
        <end position="255"/>
    </location>
</feature>
<feature type="binding site" evidence="1">
    <location>
        <position position="55"/>
    </location>
    <ligand>
        <name>Zn(2+)</name>
        <dbReference type="ChEBI" id="CHEBI:29105"/>
        <label>1</label>
    </ligand>
</feature>
<feature type="binding site" evidence="1">
    <location>
        <position position="57"/>
    </location>
    <ligand>
        <name>Zn(2+)</name>
        <dbReference type="ChEBI" id="CHEBI:29105"/>
        <label>1</label>
    </ligand>
</feature>
<feature type="binding site" evidence="1">
    <location>
        <position position="59"/>
    </location>
    <ligand>
        <name>Zn(2+)</name>
        <dbReference type="ChEBI" id="CHEBI:29105"/>
        <label>2</label>
    </ligand>
</feature>
<feature type="binding site" evidence="1">
    <location>
        <position position="60"/>
    </location>
    <ligand>
        <name>Zn(2+)</name>
        <dbReference type="ChEBI" id="CHEBI:29105"/>
        <label>2</label>
    </ligand>
</feature>
<feature type="binding site" evidence="1">
    <location>
        <position position="113"/>
    </location>
    <ligand>
        <name>Zn(2+)</name>
        <dbReference type="ChEBI" id="CHEBI:29105"/>
        <label>1</label>
    </ligand>
</feature>
<feature type="binding site" evidence="1">
    <location>
        <position position="132"/>
    </location>
    <ligand>
        <name>Zn(2+)</name>
        <dbReference type="ChEBI" id="CHEBI:29105"/>
        <label>1</label>
    </ligand>
</feature>
<feature type="binding site" evidence="1">
    <location>
        <position position="132"/>
    </location>
    <ligand>
        <name>Zn(2+)</name>
        <dbReference type="ChEBI" id="CHEBI:29105"/>
        <label>2</label>
    </ligand>
</feature>
<feature type="binding site" evidence="1">
    <location>
        <position position="170"/>
    </location>
    <ligand>
        <name>Zn(2+)</name>
        <dbReference type="ChEBI" id="CHEBI:29105"/>
        <label>2</label>
    </ligand>
</feature>
<dbReference type="EC" id="3.1.2.6" evidence="1"/>
<dbReference type="EMBL" id="CP001349">
    <property type="protein sequence ID" value="ACL55490.1"/>
    <property type="molecule type" value="Genomic_DNA"/>
</dbReference>
<dbReference type="RefSeq" id="WP_015927201.1">
    <property type="nucleotide sequence ID" value="NC_011894.1"/>
</dbReference>
<dbReference type="SMR" id="B8ICA2"/>
<dbReference type="STRING" id="460265.Mnod_0448"/>
<dbReference type="KEGG" id="mno:Mnod_0448"/>
<dbReference type="eggNOG" id="COG0491">
    <property type="taxonomic scope" value="Bacteria"/>
</dbReference>
<dbReference type="HOGENOM" id="CLU_030571_4_1_5"/>
<dbReference type="OrthoDB" id="9802248at2"/>
<dbReference type="UniPathway" id="UPA00619">
    <property type="reaction ID" value="UER00676"/>
</dbReference>
<dbReference type="Proteomes" id="UP000008207">
    <property type="component" value="Chromosome"/>
</dbReference>
<dbReference type="GO" id="GO:0004416">
    <property type="term" value="F:hydroxyacylglutathione hydrolase activity"/>
    <property type="evidence" value="ECO:0007669"/>
    <property type="project" value="UniProtKB-UniRule"/>
</dbReference>
<dbReference type="GO" id="GO:0046872">
    <property type="term" value="F:metal ion binding"/>
    <property type="evidence" value="ECO:0007669"/>
    <property type="project" value="UniProtKB-KW"/>
</dbReference>
<dbReference type="GO" id="GO:0019243">
    <property type="term" value="P:methylglyoxal catabolic process to D-lactate via S-lactoyl-glutathione"/>
    <property type="evidence" value="ECO:0007669"/>
    <property type="project" value="InterPro"/>
</dbReference>
<dbReference type="CDD" id="cd07723">
    <property type="entry name" value="hydroxyacylglutathione_hydrolase_MBL-fold"/>
    <property type="match status" value="1"/>
</dbReference>
<dbReference type="Gene3D" id="3.60.15.10">
    <property type="entry name" value="Ribonuclease Z/Hydroxyacylglutathione hydrolase-like"/>
    <property type="match status" value="1"/>
</dbReference>
<dbReference type="HAMAP" id="MF_01374">
    <property type="entry name" value="Glyoxalase_2"/>
    <property type="match status" value="1"/>
</dbReference>
<dbReference type="InterPro" id="IPR035680">
    <property type="entry name" value="Clx_II_MBL"/>
</dbReference>
<dbReference type="InterPro" id="IPR050110">
    <property type="entry name" value="Glyoxalase_II_hydrolase"/>
</dbReference>
<dbReference type="InterPro" id="IPR032282">
    <property type="entry name" value="HAGH_C"/>
</dbReference>
<dbReference type="InterPro" id="IPR017782">
    <property type="entry name" value="Hydroxyacylglutathione_Hdrlase"/>
</dbReference>
<dbReference type="InterPro" id="IPR001279">
    <property type="entry name" value="Metallo-B-lactamas"/>
</dbReference>
<dbReference type="InterPro" id="IPR036866">
    <property type="entry name" value="RibonucZ/Hydroxyglut_hydro"/>
</dbReference>
<dbReference type="NCBIfam" id="TIGR03413">
    <property type="entry name" value="GSH_gloB"/>
    <property type="match status" value="1"/>
</dbReference>
<dbReference type="PANTHER" id="PTHR43705">
    <property type="entry name" value="HYDROXYACYLGLUTATHIONE HYDROLASE"/>
    <property type="match status" value="1"/>
</dbReference>
<dbReference type="PANTHER" id="PTHR43705:SF1">
    <property type="entry name" value="HYDROXYACYLGLUTATHIONE HYDROLASE GLOB"/>
    <property type="match status" value="1"/>
</dbReference>
<dbReference type="Pfam" id="PF16123">
    <property type="entry name" value="HAGH_C"/>
    <property type="match status" value="1"/>
</dbReference>
<dbReference type="Pfam" id="PF00753">
    <property type="entry name" value="Lactamase_B"/>
    <property type="match status" value="1"/>
</dbReference>
<dbReference type="PIRSF" id="PIRSF005457">
    <property type="entry name" value="Glx"/>
    <property type="match status" value="1"/>
</dbReference>
<dbReference type="SMART" id="SM00849">
    <property type="entry name" value="Lactamase_B"/>
    <property type="match status" value="1"/>
</dbReference>
<dbReference type="SUPFAM" id="SSF56281">
    <property type="entry name" value="Metallo-hydrolase/oxidoreductase"/>
    <property type="match status" value="1"/>
</dbReference>
<organism>
    <name type="scientific">Methylobacterium nodulans (strain LMG 21967 / CNCM I-2342 / ORS 2060)</name>
    <dbReference type="NCBI Taxonomy" id="460265"/>
    <lineage>
        <taxon>Bacteria</taxon>
        <taxon>Pseudomonadati</taxon>
        <taxon>Pseudomonadota</taxon>
        <taxon>Alphaproteobacteria</taxon>
        <taxon>Hyphomicrobiales</taxon>
        <taxon>Methylobacteriaceae</taxon>
        <taxon>Methylobacterium</taxon>
    </lineage>
</organism>
<protein>
    <recommendedName>
        <fullName evidence="1">Hydroxyacylglutathione hydrolase</fullName>
        <ecNumber evidence="1">3.1.2.6</ecNumber>
    </recommendedName>
    <alternativeName>
        <fullName evidence="1">Glyoxalase II</fullName>
        <shortName evidence="1">Glx II</shortName>
    </alternativeName>
</protein>
<sequence length="255" mass="27842">MPEIRTFLCRSDNIGVLLHDPVTSACAAIDVPEAGAVLRALKETGWRLTDILVTHRHFDHVEGIPEVKARTGARVTAPAKAGDAVPEVDATVREGDVVKVGSLVGTVWETPGHCADHVTYWFERERLAFAGDTLFTLGCGRVMESPPEVLWRSLSRFLALPDETAIYSGHDYVLSNARFALAADPDNSNLKARAELAERVKRDGRFLIPTTLGEEKATNPFLRAGEPALARSVDMAPGSDPAAVFAALREWKNRF</sequence>
<comment type="function">
    <text evidence="1">Thiolesterase that catalyzes the hydrolysis of S-D-lactoyl-glutathione to form glutathione and D-lactic acid.</text>
</comment>
<comment type="catalytic activity">
    <reaction evidence="1">
        <text>an S-(2-hydroxyacyl)glutathione + H2O = a 2-hydroxy carboxylate + glutathione + H(+)</text>
        <dbReference type="Rhea" id="RHEA:21864"/>
        <dbReference type="ChEBI" id="CHEBI:15377"/>
        <dbReference type="ChEBI" id="CHEBI:15378"/>
        <dbReference type="ChEBI" id="CHEBI:57925"/>
        <dbReference type="ChEBI" id="CHEBI:58896"/>
        <dbReference type="ChEBI" id="CHEBI:71261"/>
        <dbReference type="EC" id="3.1.2.6"/>
    </reaction>
</comment>
<comment type="cofactor">
    <cofactor evidence="1">
        <name>Zn(2+)</name>
        <dbReference type="ChEBI" id="CHEBI:29105"/>
    </cofactor>
    <text evidence="1">Binds 2 Zn(2+) ions per subunit.</text>
</comment>
<comment type="pathway">
    <text evidence="1">Secondary metabolite metabolism; methylglyoxal degradation; (R)-lactate from methylglyoxal: step 2/2.</text>
</comment>
<comment type="subunit">
    <text evidence="1">Monomer.</text>
</comment>
<comment type="similarity">
    <text evidence="1">Belongs to the metallo-beta-lactamase superfamily. Glyoxalase II family.</text>
</comment>
<proteinExistence type="inferred from homology"/>
<gene>
    <name evidence="1" type="primary">gloB</name>
    <name type="ordered locus">Mnod_0448</name>
</gene>
<keyword id="KW-0378">Hydrolase</keyword>
<keyword id="KW-0479">Metal-binding</keyword>
<keyword id="KW-1185">Reference proteome</keyword>
<keyword id="KW-0862">Zinc</keyword>